<reference key="1">
    <citation type="online journal article" date="1996" name="Plant Gene Register">
        <title>CERPU;PHY0;2, a 'normal' phytochrome in Ceratodon.</title>
        <authorList>
            <person name="Hughes J.E."/>
            <person name="Lamparter T."/>
            <person name="Mittmann F."/>
        </authorList>
        <locator>PGR96-067</locator>
    </citation>
    <scope>NUCLEOTIDE SEQUENCE [GENOMIC DNA]</scope>
</reference>
<name>PHY2_CERPU</name>
<gene>
    <name type="primary">PHY2</name>
</gene>
<comment type="function">
    <text>Regulatory photoreceptor which exists in two forms that are reversibly interconvertible by light: the Pr form that absorbs maximally in the red region of the spectrum and the Pfr form that absorbs maximally in the far-red region. Photoconversion of Pr to Pfr induces an array of morphogenic responses, whereas reconversion of Pfr to Pr cancels the induction of those responses. Pfr controls the expression of a number of nuclear genes including those encoding the small subunit of ribulose-bisphosphate carboxylase, chlorophyll A/B binding protein, protochlorophyllide reductase, rRNA, etc. It also controls the expression of its own gene(s) in a negative feedback fashion.</text>
</comment>
<comment type="subunit">
    <text evidence="1">Homodimer.</text>
</comment>
<comment type="PTM">
    <text evidence="1">Contains one covalently linked phytochromobilin chromophore.</text>
</comment>
<comment type="similarity">
    <text evidence="4">Belongs to the phytochrome family.</text>
</comment>
<dbReference type="EMBL" id="U56698">
    <property type="protein sequence ID" value="AAB67863.1"/>
    <property type="molecule type" value="Genomic_DNA"/>
</dbReference>
<dbReference type="PIR" id="S58130">
    <property type="entry name" value="S58130"/>
</dbReference>
<dbReference type="SMR" id="Q39557"/>
<dbReference type="GO" id="GO:0000155">
    <property type="term" value="F:phosphorelay sensor kinase activity"/>
    <property type="evidence" value="ECO:0007669"/>
    <property type="project" value="InterPro"/>
</dbReference>
<dbReference type="GO" id="GO:0009881">
    <property type="term" value="F:photoreceptor activity"/>
    <property type="evidence" value="ECO:0007669"/>
    <property type="project" value="UniProtKB-KW"/>
</dbReference>
<dbReference type="GO" id="GO:0042803">
    <property type="term" value="F:protein homodimerization activity"/>
    <property type="evidence" value="ECO:0007669"/>
    <property type="project" value="InterPro"/>
</dbReference>
<dbReference type="GO" id="GO:0009584">
    <property type="term" value="P:detection of visible light"/>
    <property type="evidence" value="ECO:0007669"/>
    <property type="project" value="InterPro"/>
</dbReference>
<dbReference type="GO" id="GO:0009585">
    <property type="term" value="P:red, far-red light phototransduction"/>
    <property type="evidence" value="ECO:0007669"/>
    <property type="project" value="InterPro"/>
</dbReference>
<dbReference type="GO" id="GO:0006355">
    <property type="term" value="P:regulation of DNA-templated transcription"/>
    <property type="evidence" value="ECO:0007669"/>
    <property type="project" value="InterPro"/>
</dbReference>
<dbReference type="CDD" id="cd16932">
    <property type="entry name" value="HATPase_Phy-like"/>
    <property type="match status" value="1"/>
</dbReference>
<dbReference type="CDD" id="cd00082">
    <property type="entry name" value="HisKA"/>
    <property type="match status" value="1"/>
</dbReference>
<dbReference type="CDD" id="cd00130">
    <property type="entry name" value="PAS"/>
    <property type="match status" value="2"/>
</dbReference>
<dbReference type="FunFam" id="3.30.450.20:FF:000034">
    <property type="entry name" value="Phytochrome"/>
    <property type="match status" value="1"/>
</dbReference>
<dbReference type="FunFam" id="3.30.450.20:FF:000039">
    <property type="entry name" value="Phytochrome"/>
    <property type="match status" value="1"/>
</dbReference>
<dbReference type="FunFam" id="3.30.450.270:FF:000001">
    <property type="entry name" value="Phytochrome"/>
    <property type="match status" value="1"/>
</dbReference>
<dbReference type="Gene3D" id="1.10.287.130">
    <property type="match status" value="1"/>
</dbReference>
<dbReference type="Gene3D" id="3.30.450.270">
    <property type="match status" value="1"/>
</dbReference>
<dbReference type="Gene3D" id="3.30.450.40">
    <property type="match status" value="1"/>
</dbReference>
<dbReference type="Gene3D" id="3.30.565.10">
    <property type="entry name" value="Histidine kinase-like ATPase, C-terminal domain"/>
    <property type="match status" value="1"/>
</dbReference>
<dbReference type="Gene3D" id="3.30.450.20">
    <property type="entry name" value="PAS domain"/>
    <property type="match status" value="3"/>
</dbReference>
<dbReference type="InterPro" id="IPR003018">
    <property type="entry name" value="GAF"/>
</dbReference>
<dbReference type="InterPro" id="IPR029016">
    <property type="entry name" value="GAF-like_dom_sf"/>
</dbReference>
<dbReference type="InterPro" id="IPR036890">
    <property type="entry name" value="HATPase_C_sf"/>
</dbReference>
<dbReference type="InterPro" id="IPR005467">
    <property type="entry name" value="His_kinase_dom"/>
</dbReference>
<dbReference type="InterPro" id="IPR003661">
    <property type="entry name" value="HisK_dim/P_dom"/>
</dbReference>
<dbReference type="InterPro" id="IPR000014">
    <property type="entry name" value="PAS"/>
</dbReference>
<dbReference type="InterPro" id="IPR035965">
    <property type="entry name" value="PAS-like_dom_sf"/>
</dbReference>
<dbReference type="InterPro" id="IPR013654">
    <property type="entry name" value="PAS_2"/>
</dbReference>
<dbReference type="InterPro" id="IPR013767">
    <property type="entry name" value="PAS_fold"/>
</dbReference>
<dbReference type="InterPro" id="IPR044767">
    <property type="entry name" value="Phy_HATPase-like"/>
</dbReference>
<dbReference type="InterPro" id="IPR016132">
    <property type="entry name" value="Phyto_chromo_attachment"/>
</dbReference>
<dbReference type="InterPro" id="IPR013516">
    <property type="entry name" value="Phyto_chromo_BS"/>
</dbReference>
<dbReference type="InterPro" id="IPR001294">
    <property type="entry name" value="Phytochrome"/>
</dbReference>
<dbReference type="InterPro" id="IPR012129">
    <property type="entry name" value="Phytochrome_A-E"/>
</dbReference>
<dbReference type="InterPro" id="IPR013515">
    <property type="entry name" value="Phytochrome_cen-reg"/>
</dbReference>
<dbReference type="InterPro" id="IPR043150">
    <property type="entry name" value="Phytochrome_PHY_sf"/>
</dbReference>
<dbReference type="NCBIfam" id="TIGR00229">
    <property type="entry name" value="sensory_box"/>
    <property type="match status" value="1"/>
</dbReference>
<dbReference type="PANTHER" id="PTHR47876">
    <property type="entry name" value="OS08G0260000 PROTEIN"/>
    <property type="match status" value="1"/>
</dbReference>
<dbReference type="PANTHER" id="PTHR47876:SF3">
    <property type="entry name" value="PHYTOCHROME 1"/>
    <property type="match status" value="1"/>
</dbReference>
<dbReference type="Pfam" id="PF01590">
    <property type="entry name" value="GAF"/>
    <property type="match status" value="1"/>
</dbReference>
<dbReference type="Pfam" id="PF02518">
    <property type="entry name" value="HATPase_c"/>
    <property type="match status" value="1"/>
</dbReference>
<dbReference type="Pfam" id="PF00512">
    <property type="entry name" value="HisKA"/>
    <property type="match status" value="1"/>
</dbReference>
<dbReference type="Pfam" id="PF00989">
    <property type="entry name" value="PAS"/>
    <property type="match status" value="2"/>
</dbReference>
<dbReference type="Pfam" id="PF08446">
    <property type="entry name" value="PAS_2"/>
    <property type="match status" value="1"/>
</dbReference>
<dbReference type="Pfam" id="PF00360">
    <property type="entry name" value="PHY"/>
    <property type="match status" value="1"/>
</dbReference>
<dbReference type="PIRSF" id="PIRSF000084">
    <property type="entry name" value="Phytochrome"/>
    <property type="match status" value="1"/>
</dbReference>
<dbReference type="PRINTS" id="PR01033">
    <property type="entry name" value="PHYTOCHROME"/>
</dbReference>
<dbReference type="SMART" id="SM00065">
    <property type="entry name" value="GAF"/>
    <property type="match status" value="1"/>
</dbReference>
<dbReference type="SMART" id="SM00387">
    <property type="entry name" value="HATPase_c"/>
    <property type="match status" value="1"/>
</dbReference>
<dbReference type="SMART" id="SM00388">
    <property type="entry name" value="HisKA"/>
    <property type="match status" value="1"/>
</dbReference>
<dbReference type="SMART" id="SM00091">
    <property type="entry name" value="PAS"/>
    <property type="match status" value="2"/>
</dbReference>
<dbReference type="SUPFAM" id="SSF55874">
    <property type="entry name" value="ATPase domain of HSP90 chaperone/DNA topoisomerase II/histidine kinase"/>
    <property type="match status" value="1"/>
</dbReference>
<dbReference type="SUPFAM" id="SSF55781">
    <property type="entry name" value="GAF domain-like"/>
    <property type="match status" value="2"/>
</dbReference>
<dbReference type="SUPFAM" id="SSF55785">
    <property type="entry name" value="PYP-like sensor domain (PAS domain)"/>
    <property type="match status" value="3"/>
</dbReference>
<dbReference type="PROSITE" id="PS50109">
    <property type="entry name" value="HIS_KIN"/>
    <property type="match status" value="1"/>
</dbReference>
<dbReference type="PROSITE" id="PS50112">
    <property type="entry name" value="PAS"/>
    <property type="match status" value="2"/>
</dbReference>
<dbReference type="PROSITE" id="PS00245">
    <property type="entry name" value="PHYTOCHROME_1"/>
    <property type="match status" value="1"/>
</dbReference>
<dbReference type="PROSITE" id="PS50046">
    <property type="entry name" value="PHYTOCHROME_2"/>
    <property type="match status" value="1"/>
</dbReference>
<protein>
    <recommendedName>
        <fullName>Phytochrome 2</fullName>
    </recommendedName>
</protein>
<evidence type="ECO:0000250" key="1"/>
<evidence type="ECO:0000255" key="2">
    <source>
        <dbReference type="PROSITE-ProRule" id="PRU00107"/>
    </source>
</evidence>
<evidence type="ECO:0000255" key="3">
    <source>
        <dbReference type="PROSITE-ProRule" id="PRU00140"/>
    </source>
</evidence>
<evidence type="ECO:0000305" key="4"/>
<sequence>MSAPKKTYSSTTSAKSKHSVRVAQTTADAALEAVYEMSGDSGDSFDYSKSVGQSAESVPAGAVTAYLQRMQRGGLIQTFGCMVAVEEPNFCVIAYSENASEFLDLMPQAVPSMGEMDVLGIGTDIRTLFTPSSGAALEKAAATQDISLLNPITVHCRRSGKPLYAIAHRIDIGIVIDFEAVKMNDVSVSAAGALQSHKLAAKAITRLQALPGGDIGLLCDTVVEEVRELTGYDRVMAYKFHEDEHGEVVAEIRRMDLEPYLGLHYPATDIPQASRFLFMKNRVRVIADCCASPVKLIQDPDIKQPVSLAGSTLRAPHGCHAQYMGNMGSIASLVMAVIINDNEEDSRGAIQRGRKLWGLVVCHHTSPRTVPFPLRSACEFLMQVFGMQLNMEVELAAQLREKHILRTQTLLCDMLLRDAPIGIVSQTPNIMDLVKCDGAALYYGKRFWLLGTTPTENQIKDIAEWLLEYHKDSTGLSTDSLADANYPGAHLLGDAVCGMAAAKITAKDFLFWFRSHTAKEVKWGGAKHDPAEKDDGRKMHPRSSFKAFLEVVKRRSLPWEDVEMDAIHSLQLILRGSFQDIDDSDTKTMIHARLNDLKLHGMDELSVVANEMVRLIETATAPILAVDSTGMINGWNAKIAHVTGLPVSEAMGRSLVKDLVLDESVVVVERLLYLASQGEEEQNVEIKLKTFGTQTEKEAVILIVNACSSRDVSDSVVGVCFVGQDVTGQKMFMDKFTRIQGDYKTIVKNPHPLIPPIFGGDEYGYCFEWNPAMEALTGWKHDEVVGKLLVGEIFGMEMMCCRLKSQDSMTKFMISLNNAMDGTNTDKFSFSFCNREGKFVEALLSTNKRTNADGVITGVFCFLQIASSELQQALTVQRATEKVAIAKLKELAYIRQEIKNPLCGITFTRQLLEDTDLSDDQKQFLDTSAVCEQQLQKVLNDMDLESIEDGYLELDTAEFEMGTVMDAVISQGMTTSREKGLQIIRETPREISTMRLFGDQIRLQQVLSDFLINAIRFTPSSEGWVKIKVVPTRKRLGGNVHVMHLEFRVSHPGGGLPDELVLEMYDRAKGMTQEGLGLNMCRKLVRLMNGDVQYVRENAQCYFVVYVELPMAQRDDAASQM</sequence>
<accession>Q39557</accession>
<keyword id="KW-0157">Chromophore</keyword>
<keyword id="KW-0600">Photoreceptor protein</keyword>
<keyword id="KW-0675">Receptor</keyword>
<keyword id="KW-0677">Repeat</keyword>
<keyword id="KW-0716">Sensory transduction</keyword>
<keyword id="KW-0804">Transcription</keyword>
<keyword id="KW-0805">Transcription regulation</keyword>
<organism>
    <name type="scientific">Ceratodon purpureus</name>
    <name type="common">Fire moss</name>
    <name type="synonym">Dicranum purpureum</name>
    <dbReference type="NCBI Taxonomy" id="3225"/>
    <lineage>
        <taxon>Eukaryota</taxon>
        <taxon>Viridiplantae</taxon>
        <taxon>Streptophyta</taxon>
        <taxon>Embryophyta</taxon>
        <taxon>Bryophyta</taxon>
        <taxon>Bryophytina</taxon>
        <taxon>Bryopsida</taxon>
        <taxon>Dicranidae</taxon>
        <taxon>Pseudoditrichales</taxon>
        <taxon>Ditrichaceae</taxon>
        <taxon>Ceratodon</taxon>
    </lineage>
</organism>
<proteinExistence type="inferred from homology"/>
<feature type="chain" id="PRO_0000171971" description="Phytochrome 2">
    <location>
        <begin position="1"/>
        <end position="1121"/>
    </location>
</feature>
<feature type="domain" description="GAF">
    <location>
        <begin position="214"/>
        <end position="393"/>
    </location>
</feature>
<feature type="domain" description="PAS 1" evidence="3">
    <location>
        <begin position="608"/>
        <end position="679"/>
    </location>
</feature>
<feature type="domain" description="PAS 2" evidence="3">
    <location>
        <begin position="742"/>
        <end position="813"/>
    </location>
</feature>
<feature type="domain" description="Histidine kinase" evidence="2">
    <location>
        <begin position="893"/>
        <end position="1113"/>
    </location>
</feature>
<feature type="binding site" description="covalent" evidence="1">
    <location>
        <position position="319"/>
    </location>
    <ligand>
        <name>phytochromobilin</name>
        <dbReference type="ChEBI" id="CHEBI:189064"/>
    </ligand>
</feature>